<gene>
    <name evidence="1" type="primary">rpsH</name>
    <name type="ordered locus">Sden_0184</name>
</gene>
<organism>
    <name type="scientific">Shewanella denitrificans (strain OS217 / ATCC BAA-1090 / DSM 15013)</name>
    <dbReference type="NCBI Taxonomy" id="318161"/>
    <lineage>
        <taxon>Bacteria</taxon>
        <taxon>Pseudomonadati</taxon>
        <taxon>Pseudomonadota</taxon>
        <taxon>Gammaproteobacteria</taxon>
        <taxon>Alteromonadales</taxon>
        <taxon>Shewanellaceae</taxon>
        <taxon>Shewanella</taxon>
    </lineage>
</organism>
<dbReference type="EMBL" id="CP000302">
    <property type="protein sequence ID" value="ABE53481.1"/>
    <property type="molecule type" value="Genomic_DNA"/>
</dbReference>
<dbReference type="RefSeq" id="WP_011494648.1">
    <property type="nucleotide sequence ID" value="NC_007954.1"/>
</dbReference>
<dbReference type="SMR" id="Q12SU5"/>
<dbReference type="STRING" id="318161.Sden_0184"/>
<dbReference type="KEGG" id="sdn:Sden_0184"/>
<dbReference type="eggNOG" id="COG0096">
    <property type="taxonomic scope" value="Bacteria"/>
</dbReference>
<dbReference type="HOGENOM" id="CLU_098428_0_0_6"/>
<dbReference type="OrthoDB" id="9802617at2"/>
<dbReference type="Proteomes" id="UP000001982">
    <property type="component" value="Chromosome"/>
</dbReference>
<dbReference type="GO" id="GO:1990904">
    <property type="term" value="C:ribonucleoprotein complex"/>
    <property type="evidence" value="ECO:0007669"/>
    <property type="project" value="UniProtKB-KW"/>
</dbReference>
<dbReference type="GO" id="GO:0005840">
    <property type="term" value="C:ribosome"/>
    <property type="evidence" value="ECO:0007669"/>
    <property type="project" value="UniProtKB-KW"/>
</dbReference>
<dbReference type="GO" id="GO:0019843">
    <property type="term" value="F:rRNA binding"/>
    <property type="evidence" value="ECO:0007669"/>
    <property type="project" value="UniProtKB-UniRule"/>
</dbReference>
<dbReference type="GO" id="GO:0003735">
    <property type="term" value="F:structural constituent of ribosome"/>
    <property type="evidence" value="ECO:0007669"/>
    <property type="project" value="InterPro"/>
</dbReference>
<dbReference type="GO" id="GO:0006412">
    <property type="term" value="P:translation"/>
    <property type="evidence" value="ECO:0007669"/>
    <property type="project" value="UniProtKB-UniRule"/>
</dbReference>
<dbReference type="FunFam" id="3.30.1370.30:FF:000003">
    <property type="entry name" value="30S ribosomal protein S8"/>
    <property type="match status" value="1"/>
</dbReference>
<dbReference type="FunFam" id="3.30.1490.10:FF:000001">
    <property type="entry name" value="30S ribosomal protein S8"/>
    <property type="match status" value="1"/>
</dbReference>
<dbReference type="Gene3D" id="3.30.1370.30">
    <property type="match status" value="1"/>
</dbReference>
<dbReference type="Gene3D" id="3.30.1490.10">
    <property type="match status" value="1"/>
</dbReference>
<dbReference type="HAMAP" id="MF_01302_B">
    <property type="entry name" value="Ribosomal_uS8_B"/>
    <property type="match status" value="1"/>
</dbReference>
<dbReference type="InterPro" id="IPR000630">
    <property type="entry name" value="Ribosomal_uS8"/>
</dbReference>
<dbReference type="InterPro" id="IPR047863">
    <property type="entry name" value="Ribosomal_uS8_CS"/>
</dbReference>
<dbReference type="InterPro" id="IPR035987">
    <property type="entry name" value="Ribosomal_uS8_sf"/>
</dbReference>
<dbReference type="NCBIfam" id="NF001109">
    <property type="entry name" value="PRK00136.1"/>
    <property type="match status" value="1"/>
</dbReference>
<dbReference type="PANTHER" id="PTHR11758">
    <property type="entry name" value="40S RIBOSOMAL PROTEIN S15A"/>
    <property type="match status" value="1"/>
</dbReference>
<dbReference type="Pfam" id="PF00410">
    <property type="entry name" value="Ribosomal_S8"/>
    <property type="match status" value="1"/>
</dbReference>
<dbReference type="SUPFAM" id="SSF56047">
    <property type="entry name" value="Ribosomal protein S8"/>
    <property type="match status" value="1"/>
</dbReference>
<dbReference type="PROSITE" id="PS00053">
    <property type="entry name" value="RIBOSOMAL_S8"/>
    <property type="match status" value="1"/>
</dbReference>
<protein>
    <recommendedName>
        <fullName evidence="1">Small ribosomal subunit protein uS8</fullName>
    </recommendedName>
    <alternativeName>
        <fullName evidence="2">30S ribosomal protein S8</fullName>
    </alternativeName>
</protein>
<accession>Q12SU5</accession>
<reference key="1">
    <citation type="submission" date="2006-03" db="EMBL/GenBank/DDBJ databases">
        <title>Complete sequence of Shewanella denitrificans OS217.</title>
        <authorList>
            <consortium name="US DOE Joint Genome Institute"/>
            <person name="Copeland A."/>
            <person name="Lucas S."/>
            <person name="Lapidus A."/>
            <person name="Barry K."/>
            <person name="Detter J.C."/>
            <person name="Glavina del Rio T."/>
            <person name="Hammon N."/>
            <person name="Israni S."/>
            <person name="Dalin E."/>
            <person name="Tice H."/>
            <person name="Pitluck S."/>
            <person name="Brettin T."/>
            <person name="Bruce D."/>
            <person name="Han C."/>
            <person name="Tapia R."/>
            <person name="Gilna P."/>
            <person name="Kiss H."/>
            <person name="Schmutz J."/>
            <person name="Larimer F."/>
            <person name="Land M."/>
            <person name="Hauser L."/>
            <person name="Kyrpides N."/>
            <person name="Lykidis A."/>
            <person name="Richardson P."/>
        </authorList>
    </citation>
    <scope>NUCLEOTIDE SEQUENCE [LARGE SCALE GENOMIC DNA]</scope>
    <source>
        <strain>OS217 / ATCC BAA-1090 / DSM 15013</strain>
    </source>
</reference>
<sequence length="130" mass="14033">MSMQDPIADMLTRIRNGQAANHVSVKMPSAKLKVAIAKLLQDEGFITGYAVADEAKPELEITLKYFQGKPVVETIQRVSRPGLRIYKGKDELPKVMGGLGIAIVSTSQGLMTDRAARQNGTGGEVICYVA</sequence>
<proteinExistence type="inferred from homology"/>
<name>RS8_SHEDO</name>
<keyword id="KW-1185">Reference proteome</keyword>
<keyword id="KW-0687">Ribonucleoprotein</keyword>
<keyword id="KW-0689">Ribosomal protein</keyword>
<keyword id="KW-0694">RNA-binding</keyword>
<keyword id="KW-0699">rRNA-binding</keyword>
<comment type="function">
    <text evidence="1">One of the primary rRNA binding proteins, it binds directly to 16S rRNA central domain where it helps coordinate assembly of the platform of the 30S subunit.</text>
</comment>
<comment type="subunit">
    <text evidence="1">Part of the 30S ribosomal subunit. Contacts proteins S5 and S12.</text>
</comment>
<comment type="similarity">
    <text evidence="1">Belongs to the universal ribosomal protein uS8 family.</text>
</comment>
<evidence type="ECO:0000255" key="1">
    <source>
        <dbReference type="HAMAP-Rule" id="MF_01302"/>
    </source>
</evidence>
<evidence type="ECO:0000305" key="2"/>
<feature type="chain" id="PRO_0000290926" description="Small ribosomal subunit protein uS8">
    <location>
        <begin position="1"/>
        <end position="130"/>
    </location>
</feature>